<reference key="1">
    <citation type="journal article" date="2008" name="Chem. Biol. Interact.">
        <title>Extending the Bacillus cereus group genomics to putative food-borne pathogens of different toxicity.</title>
        <authorList>
            <person name="Lapidus A."/>
            <person name="Goltsman E."/>
            <person name="Auger S."/>
            <person name="Galleron N."/>
            <person name="Segurens B."/>
            <person name="Dossat C."/>
            <person name="Land M.L."/>
            <person name="Broussolle V."/>
            <person name="Brillard J."/>
            <person name="Guinebretiere M.-H."/>
            <person name="Sanchis V."/>
            <person name="Nguen-the C."/>
            <person name="Lereclus D."/>
            <person name="Richardson P."/>
            <person name="Wincker P."/>
            <person name="Weissenbach J."/>
            <person name="Ehrlich S.D."/>
            <person name="Sorokin A."/>
        </authorList>
    </citation>
    <scope>NUCLEOTIDE SEQUENCE [LARGE SCALE GENOMIC DNA]</scope>
    <source>
        <strain>DSM 22905 / CIP 110041 / 391-98 / NVH 391-98</strain>
    </source>
</reference>
<accession>A7GJT0</accession>
<organism>
    <name type="scientific">Bacillus cytotoxicus (strain DSM 22905 / CIP 110041 / 391-98 / NVH 391-98)</name>
    <dbReference type="NCBI Taxonomy" id="315749"/>
    <lineage>
        <taxon>Bacteria</taxon>
        <taxon>Bacillati</taxon>
        <taxon>Bacillota</taxon>
        <taxon>Bacilli</taxon>
        <taxon>Bacillales</taxon>
        <taxon>Bacillaceae</taxon>
        <taxon>Bacillus</taxon>
        <taxon>Bacillus cereus group</taxon>
    </lineage>
</organism>
<evidence type="ECO:0000255" key="1">
    <source>
        <dbReference type="HAMAP-Rule" id="MF_00176"/>
    </source>
</evidence>
<feature type="chain" id="PRO_1000077185" description="Serine--tRNA ligase">
    <location>
        <begin position="1"/>
        <end position="424"/>
    </location>
</feature>
<feature type="binding site" evidence="1">
    <location>
        <begin position="231"/>
        <end position="233"/>
    </location>
    <ligand>
        <name>L-serine</name>
        <dbReference type="ChEBI" id="CHEBI:33384"/>
    </ligand>
</feature>
<feature type="binding site" evidence="1">
    <location>
        <begin position="262"/>
        <end position="264"/>
    </location>
    <ligand>
        <name>ATP</name>
        <dbReference type="ChEBI" id="CHEBI:30616"/>
    </ligand>
</feature>
<feature type="binding site" evidence="1">
    <location>
        <position position="285"/>
    </location>
    <ligand>
        <name>L-serine</name>
        <dbReference type="ChEBI" id="CHEBI:33384"/>
    </ligand>
</feature>
<feature type="binding site" evidence="1">
    <location>
        <begin position="349"/>
        <end position="352"/>
    </location>
    <ligand>
        <name>ATP</name>
        <dbReference type="ChEBI" id="CHEBI:30616"/>
    </ligand>
</feature>
<feature type="binding site" evidence="1">
    <location>
        <position position="385"/>
    </location>
    <ligand>
        <name>L-serine</name>
        <dbReference type="ChEBI" id="CHEBI:33384"/>
    </ligand>
</feature>
<sequence length="424" mass="48769">MLDIKFLRANFEEVKEKLQHRGEDLADFECFEELDTKRRELLVQTEELKSKRNEVSQQISMLKREKKDAEALILEMREVGEKIKGLDNELREVEEDLERLMLSIPNIPHESTPVGETEDDNVVVRTWGEVKEFNFEPKPHWDLATDLGIVDFERAGKVTGSRFVFYKGAGARLERALISFMLDLHTEEHGYEEVLPPYMVNRASMTGTGQLPKFEEDAFLIESEDYFLIPTAEVPVTNMHRDEILSAEQLPIRYAAFSSCFRSEAGSAGRDTRGLIRQHQFNKVELVKFVKPEESYEELEKLTNDAERVLQLLELPYRVMSMCTGDLGFTAAKKYDIEVWLPSYDTYREISSCSNFEAFQARRANIRFRREPNAKPEPVHTLNGSGLAIGRTVAAILENYQQEDGTIIIPEVLRPYMGGKTVIK</sequence>
<name>SYS_BACCN</name>
<keyword id="KW-0030">Aminoacyl-tRNA synthetase</keyword>
<keyword id="KW-0067">ATP-binding</keyword>
<keyword id="KW-0963">Cytoplasm</keyword>
<keyword id="KW-0436">Ligase</keyword>
<keyword id="KW-0547">Nucleotide-binding</keyword>
<keyword id="KW-0648">Protein biosynthesis</keyword>
<protein>
    <recommendedName>
        <fullName evidence="1">Serine--tRNA ligase</fullName>
        <ecNumber evidence="1">6.1.1.11</ecNumber>
    </recommendedName>
    <alternativeName>
        <fullName evidence="1">Seryl-tRNA synthetase</fullName>
        <shortName evidence="1">SerRS</shortName>
    </alternativeName>
    <alternativeName>
        <fullName evidence="1">Seryl-tRNA(Ser/Sec) synthetase</fullName>
    </alternativeName>
</protein>
<gene>
    <name evidence="1" type="primary">serS</name>
    <name type="ordered locus">Bcer98_0012</name>
</gene>
<proteinExistence type="inferred from homology"/>
<dbReference type="EC" id="6.1.1.11" evidence="1"/>
<dbReference type="EMBL" id="CP000764">
    <property type="protein sequence ID" value="ABS20388.1"/>
    <property type="molecule type" value="Genomic_DNA"/>
</dbReference>
<dbReference type="RefSeq" id="WP_011983159.1">
    <property type="nucleotide sequence ID" value="NC_009674.1"/>
</dbReference>
<dbReference type="SMR" id="A7GJT0"/>
<dbReference type="STRING" id="315749.Bcer98_0012"/>
<dbReference type="GeneID" id="33895310"/>
<dbReference type="KEGG" id="bcy:Bcer98_0012"/>
<dbReference type="eggNOG" id="COG0172">
    <property type="taxonomic scope" value="Bacteria"/>
</dbReference>
<dbReference type="HOGENOM" id="CLU_023797_1_1_9"/>
<dbReference type="OrthoDB" id="9804647at2"/>
<dbReference type="UniPathway" id="UPA00906">
    <property type="reaction ID" value="UER00895"/>
</dbReference>
<dbReference type="Proteomes" id="UP000002300">
    <property type="component" value="Chromosome"/>
</dbReference>
<dbReference type="GO" id="GO:0005737">
    <property type="term" value="C:cytoplasm"/>
    <property type="evidence" value="ECO:0007669"/>
    <property type="project" value="UniProtKB-SubCell"/>
</dbReference>
<dbReference type="GO" id="GO:0005524">
    <property type="term" value="F:ATP binding"/>
    <property type="evidence" value="ECO:0007669"/>
    <property type="project" value="UniProtKB-UniRule"/>
</dbReference>
<dbReference type="GO" id="GO:0140096">
    <property type="term" value="F:catalytic activity, acting on a protein"/>
    <property type="evidence" value="ECO:0007669"/>
    <property type="project" value="UniProtKB-ARBA"/>
</dbReference>
<dbReference type="GO" id="GO:0004828">
    <property type="term" value="F:serine-tRNA ligase activity"/>
    <property type="evidence" value="ECO:0007669"/>
    <property type="project" value="UniProtKB-UniRule"/>
</dbReference>
<dbReference type="GO" id="GO:0016740">
    <property type="term" value="F:transferase activity"/>
    <property type="evidence" value="ECO:0007669"/>
    <property type="project" value="UniProtKB-ARBA"/>
</dbReference>
<dbReference type="GO" id="GO:0016260">
    <property type="term" value="P:selenocysteine biosynthetic process"/>
    <property type="evidence" value="ECO:0007669"/>
    <property type="project" value="UniProtKB-UniRule"/>
</dbReference>
<dbReference type="GO" id="GO:0006434">
    <property type="term" value="P:seryl-tRNA aminoacylation"/>
    <property type="evidence" value="ECO:0007669"/>
    <property type="project" value="UniProtKB-UniRule"/>
</dbReference>
<dbReference type="CDD" id="cd00770">
    <property type="entry name" value="SerRS_core"/>
    <property type="match status" value="1"/>
</dbReference>
<dbReference type="Gene3D" id="3.30.930.10">
    <property type="entry name" value="Bira Bifunctional Protein, Domain 2"/>
    <property type="match status" value="1"/>
</dbReference>
<dbReference type="Gene3D" id="1.10.287.40">
    <property type="entry name" value="Serine-tRNA synthetase, tRNA binding domain"/>
    <property type="match status" value="1"/>
</dbReference>
<dbReference type="HAMAP" id="MF_00176">
    <property type="entry name" value="Ser_tRNA_synth_type1"/>
    <property type="match status" value="1"/>
</dbReference>
<dbReference type="InterPro" id="IPR002314">
    <property type="entry name" value="aa-tRNA-synt_IIb"/>
</dbReference>
<dbReference type="InterPro" id="IPR006195">
    <property type="entry name" value="aa-tRNA-synth_II"/>
</dbReference>
<dbReference type="InterPro" id="IPR045864">
    <property type="entry name" value="aa-tRNA-synth_II/BPL/LPL"/>
</dbReference>
<dbReference type="InterPro" id="IPR002317">
    <property type="entry name" value="Ser-tRNA-ligase_type_1"/>
</dbReference>
<dbReference type="InterPro" id="IPR015866">
    <property type="entry name" value="Ser-tRNA-synth_1_N"/>
</dbReference>
<dbReference type="InterPro" id="IPR042103">
    <property type="entry name" value="SerRS_1_N_sf"/>
</dbReference>
<dbReference type="InterPro" id="IPR033729">
    <property type="entry name" value="SerRS_core"/>
</dbReference>
<dbReference type="InterPro" id="IPR010978">
    <property type="entry name" value="tRNA-bd_arm"/>
</dbReference>
<dbReference type="NCBIfam" id="TIGR00414">
    <property type="entry name" value="serS"/>
    <property type="match status" value="1"/>
</dbReference>
<dbReference type="PANTHER" id="PTHR43697:SF1">
    <property type="entry name" value="SERINE--TRNA LIGASE"/>
    <property type="match status" value="1"/>
</dbReference>
<dbReference type="PANTHER" id="PTHR43697">
    <property type="entry name" value="SERYL-TRNA SYNTHETASE"/>
    <property type="match status" value="1"/>
</dbReference>
<dbReference type="Pfam" id="PF02403">
    <property type="entry name" value="Seryl_tRNA_N"/>
    <property type="match status" value="1"/>
</dbReference>
<dbReference type="Pfam" id="PF00587">
    <property type="entry name" value="tRNA-synt_2b"/>
    <property type="match status" value="1"/>
</dbReference>
<dbReference type="PIRSF" id="PIRSF001529">
    <property type="entry name" value="Ser-tRNA-synth_IIa"/>
    <property type="match status" value="1"/>
</dbReference>
<dbReference type="PRINTS" id="PR00981">
    <property type="entry name" value="TRNASYNTHSER"/>
</dbReference>
<dbReference type="SUPFAM" id="SSF55681">
    <property type="entry name" value="Class II aaRS and biotin synthetases"/>
    <property type="match status" value="1"/>
</dbReference>
<dbReference type="SUPFAM" id="SSF46589">
    <property type="entry name" value="tRNA-binding arm"/>
    <property type="match status" value="1"/>
</dbReference>
<dbReference type="PROSITE" id="PS50862">
    <property type="entry name" value="AA_TRNA_LIGASE_II"/>
    <property type="match status" value="1"/>
</dbReference>
<comment type="function">
    <text evidence="1">Catalyzes the attachment of serine to tRNA(Ser). Is also able to aminoacylate tRNA(Sec) with serine, to form the misacylated tRNA L-seryl-tRNA(Sec), which will be further converted into selenocysteinyl-tRNA(Sec).</text>
</comment>
<comment type="catalytic activity">
    <reaction evidence="1">
        <text>tRNA(Ser) + L-serine + ATP = L-seryl-tRNA(Ser) + AMP + diphosphate + H(+)</text>
        <dbReference type="Rhea" id="RHEA:12292"/>
        <dbReference type="Rhea" id="RHEA-COMP:9669"/>
        <dbReference type="Rhea" id="RHEA-COMP:9703"/>
        <dbReference type="ChEBI" id="CHEBI:15378"/>
        <dbReference type="ChEBI" id="CHEBI:30616"/>
        <dbReference type="ChEBI" id="CHEBI:33019"/>
        <dbReference type="ChEBI" id="CHEBI:33384"/>
        <dbReference type="ChEBI" id="CHEBI:78442"/>
        <dbReference type="ChEBI" id="CHEBI:78533"/>
        <dbReference type="ChEBI" id="CHEBI:456215"/>
        <dbReference type="EC" id="6.1.1.11"/>
    </reaction>
</comment>
<comment type="catalytic activity">
    <reaction evidence="1">
        <text>tRNA(Sec) + L-serine + ATP = L-seryl-tRNA(Sec) + AMP + diphosphate + H(+)</text>
        <dbReference type="Rhea" id="RHEA:42580"/>
        <dbReference type="Rhea" id="RHEA-COMP:9742"/>
        <dbReference type="Rhea" id="RHEA-COMP:10128"/>
        <dbReference type="ChEBI" id="CHEBI:15378"/>
        <dbReference type="ChEBI" id="CHEBI:30616"/>
        <dbReference type="ChEBI" id="CHEBI:33019"/>
        <dbReference type="ChEBI" id="CHEBI:33384"/>
        <dbReference type="ChEBI" id="CHEBI:78442"/>
        <dbReference type="ChEBI" id="CHEBI:78533"/>
        <dbReference type="ChEBI" id="CHEBI:456215"/>
        <dbReference type="EC" id="6.1.1.11"/>
    </reaction>
</comment>
<comment type="pathway">
    <text evidence="1">Aminoacyl-tRNA biosynthesis; selenocysteinyl-tRNA(Sec) biosynthesis; L-seryl-tRNA(Sec) from L-serine and tRNA(Sec): step 1/1.</text>
</comment>
<comment type="subunit">
    <text evidence="1">Homodimer. The tRNA molecule binds across the dimer.</text>
</comment>
<comment type="subcellular location">
    <subcellularLocation>
        <location evidence="1">Cytoplasm</location>
    </subcellularLocation>
</comment>
<comment type="domain">
    <text evidence="1">Consists of two distinct domains, a catalytic core and a N-terminal extension that is involved in tRNA binding.</text>
</comment>
<comment type="similarity">
    <text evidence="1">Belongs to the class-II aminoacyl-tRNA synthetase family. Type-1 seryl-tRNA synthetase subfamily.</text>
</comment>